<keyword id="KW-0255">Endonuclease</keyword>
<keyword id="KW-0378">Hydrolase</keyword>
<keyword id="KW-0479">Metal-binding</keyword>
<keyword id="KW-0540">Nuclease</keyword>
<keyword id="KW-0819">tRNA processing</keyword>
<keyword id="KW-0862">Zinc</keyword>
<reference key="1">
    <citation type="submission" date="2008-10" db="EMBL/GenBank/DDBJ databases">
        <title>Genome sequence of Bacillus cereus AH820.</title>
        <authorList>
            <person name="Dodson R.J."/>
            <person name="Durkin A.S."/>
            <person name="Rosovitz M.J."/>
            <person name="Rasko D.A."/>
            <person name="Hoffmaster A."/>
            <person name="Ravel J."/>
            <person name="Sutton G."/>
        </authorList>
    </citation>
    <scope>NUCLEOTIDE SEQUENCE [LARGE SCALE GENOMIC DNA]</scope>
    <source>
        <strain>AH820</strain>
    </source>
</reference>
<dbReference type="EC" id="3.1.26.11" evidence="1"/>
<dbReference type="EMBL" id="CP001283">
    <property type="protein sequence ID" value="ACK91776.1"/>
    <property type="molecule type" value="Genomic_DNA"/>
</dbReference>
<dbReference type="RefSeq" id="WP_000397440.1">
    <property type="nucleotide sequence ID" value="NC_011773.1"/>
</dbReference>
<dbReference type="SMR" id="B7JLZ5"/>
<dbReference type="GeneID" id="45024027"/>
<dbReference type="KEGG" id="bcu:BCAH820_4164"/>
<dbReference type="HOGENOM" id="CLU_031317_2_0_9"/>
<dbReference type="Proteomes" id="UP000001363">
    <property type="component" value="Chromosome"/>
</dbReference>
<dbReference type="GO" id="GO:0042781">
    <property type="term" value="F:3'-tRNA processing endoribonuclease activity"/>
    <property type="evidence" value="ECO:0007669"/>
    <property type="project" value="UniProtKB-UniRule"/>
</dbReference>
<dbReference type="GO" id="GO:0008270">
    <property type="term" value="F:zinc ion binding"/>
    <property type="evidence" value="ECO:0007669"/>
    <property type="project" value="UniProtKB-UniRule"/>
</dbReference>
<dbReference type="CDD" id="cd07717">
    <property type="entry name" value="RNaseZ_ZiPD-like_MBL-fold"/>
    <property type="match status" value="1"/>
</dbReference>
<dbReference type="FunFam" id="3.60.15.10:FF:000002">
    <property type="entry name" value="Ribonuclease Z"/>
    <property type="match status" value="1"/>
</dbReference>
<dbReference type="Gene3D" id="3.60.15.10">
    <property type="entry name" value="Ribonuclease Z/Hydroxyacylglutathione hydrolase-like"/>
    <property type="match status" value="1"/>
</dbReference>
<dbReference type="HAMAP" id="MF_01818">
    <property type="entry name" value="RNase_Z_BN"/>
    <property type="match status" value="1"/>
</dbReference>
<dbReference type="InterPro" id="IPR001279">
    <property type="entry name" value="Metallo-B-lactamas"/>
</dbReference>
<dbReference type="InterPro" id="IPR036866">
    <property type="entry name" value="RibonucZ/Hydroxyglut_hydro"/>
</dbReference>
<dbReference type="InterPro" id="IPR013471">
    <property type="entry name" value="RNase_Z/BN"/>
</dbReference>
<dbReference type="NCBIfam" id="NF000800">
    <property type="entry name" value="PRK00055.1-1"/>
    <property type="match status" value="1"/>
</dbReference>
<dbReference type="NCBIfam" id="NF000801">
    <property type="entry name" value="PRK00055.1-3"/>
    <property type="match status" value="1"/>
</dbReference>
<dbReference type="NCBIfam" id="TIGR02651">
    <property type="entry name" value="RNase_Z"/>
    <property type="match status" value="1"/>
</dbReference>
<dbReference type="PANTHER" id="PTHR46018">
    <property type="entry name" value="ZINC PHOSPHODIESTERASE ELAC PROTEIN 1"/>
    <property type="match status" value="1"/>
</dbReference>
<dbReference type="PANTHER" id="PTHR46018:SF2">
    <property type="entry name" value="ZINC PHOSPHODIESTERASE ELAC PROTEIN 1"/>
    <property type="match status" value="1"/>
</dbReference>
<dbReference type="Pfam" id="PF00753">
    <property type="entry name" value="Lactamase_B"/>
    <property type="match status" value="1"/>
</dbReference>
<dbReference type="Pfam" id="PF12706">
    <property type="entry name" value="Lactamase_B_2"/>
    <property type="match status" value="1"/>
</dbReference>
<dbReference type="SMART" id="SM00849">
    <property type="entry name" value="Lactamase_B"/>
    <property type="match status" value="1"/>
</dbReference>
<dbReference type="SUPFAM" id="SSF56281">
    <property type="entry name" value="Metallo-hydrolase/oxidoreductase"/>
    <property type="match status" value="1"/>
</dbReference>
<accession>B7JLZ5</accession>
<sequence length="307" mass="34181">MEFVFLGTGAGVPSKGRNVSAIALQLLEERGQTWLFDCGEATQHQILHTSVRPRRIEKIFITHLHGDHIFGLPGLLGSRSFQGGTTPLTVYGPKGIKQFIEVALSVSTTHVKYPLEIVEITEEGTVFEDNEFHVETKRLSHGIECFGYRIIEKDIQGALLVDKLLEIGVKPGPLFKRLKDGEVVELENGTILNGNDFIGPPQKGRVITILGDTRYCEASRELAQDADVLVHEATFAAEDEQQAYDYFHSTSKQAASIALQANAKRLILTHISSRYQGDTYKELLKEARELFSNTEIATDLKSFPVDR</sequence>
<evidence type="ECO:0000255" key="1">
    <source>
        <dbReference type="HAMAP-Rule" id="MF_01818"/>
    </source>
</evidence>
<comment type="function">
    <text evidence="1">Zinc phosphodiesterase, which displays some tRNA 3'-processing endonuclease activity. Probably involved in tRNA maturation, by removing a 3'-trailer from precursor tRNA.</text>
</comment>
<comment type="catalytic activity">
    <reaction evidence="1">
        <text>Endonucleolytic cleavage of RNA, removing extra 3' nucleotides from tRNA precursor, generating 3' termini of tRNAs. A 3'-hydroxy group is left at the tRNA terminus and a 5'-phosphoryl group is left at the trailer molecule.</text>
        <dbReference type="EC" id="3.1.26.11"/>
    </reaction>
</comment>
<comment type="cofactor">
    <cofactor evidence="1">
        <name>Zn(2+)</name>
        <dbReference type="ChEBI" id="CHEBI:29105"/>
    </cofactor>
    <text evidence="1">Binds 2 Zn(2+) ions.</text>
</comment>
<comment type="subunit">
    <text evidence="1">Homodimer.</text>
</comment>
<comment type="similarity">
    <text evidence="1">Belongs to the RNase Z family.</text>
</comment>
<organism>
    <name type="scientific">Bacillus cereus (strain AH820)</name>
    <dbReference type="NCBI Taxonomy" id="405535"/>
    <lineage>
        <taxon>Bacteria</taxon>
        <taxon>Bacillati</taxon>
        <taxon>Bacillota</taxon>
        <taxon>Bacilli</taxon>
        <taxon>Bacillales</taxon>
        <taxon>Bacillaceae</taxon>
        <taxon>Bacillus</taxon>
        <taxon>Bacillus cereus group</taxon>
    </lineage>
</organism>
<name>RNZ_BACC0</name>
<feature type="chain" id="PRO_1000187930" description="Ribonuclease Z">
    <location>
        <begin position="1"/>
        <end position="307"/>
    </location>
</feature>
<feature type="active site" description="Proton acceptor" evidence="1">
    <location>
        <position position="67"/>
    </location>
</feature>
<feature type="binding site" evidence="1">
    <location>
        <position position="63"/>
    </location>
    <ligand>
        <name>Zn(2+)</name>
        <dbReference type="ChEBI" id="CHEBI:29105"/>
        <label>1</label>
        <note>catalytic</note>
    </ligand>
</feature>
<feature type="binding site" evidence="1">
    <location>
        <position position="65"/>
    </location>
    <ligand>
        <name>Zn(2+)</name>
        <dbReference type="ChEBI" id="CHEBI:29105"/>
        <label>1</label>
        <note>catalytic</note>
    </ligand>
</feature>
<feature type="binding site" evidence="1">
    <location>
        <position position="67"/>
    </location>
    <ligand>
        <name>Zn(2+)</name>
        <dbReference type="ChEBI" id="CHEBI:29105"/>
        <label>2</label>
        <note>catalytic</note>
    </ligand>
</feature>
<feature type="binding site" evidence="1">
    <location>
        <position position="68"/>
    </location>
    <ligand>
        <name>Zn(2+)</name>
        <dbReference type="ChEBI" id="CHEBI:29105"/>
        <label>2</label>
        <note>catalytic</note>
    </ligand>
</feature>
<feature type="binding site" evidence="1">
    <location>
        <position position="141"/>
    </location>
    <ligand>
        <name>Zn(2+)</name>
        <dbReference type="ChEBI" id="CHEBI:29105"/>
        <label>1</label>
        <note>catalytic</note>
    </ligand>
</feature>
<feature type="binding site" evidence="1">
    <location>
        <position position="212"/>
    </location>
    <ligand>
        <name>Zn(2+)</name>
        <dbReference type="ChEBI" id="CHEBI:29105"/>
        <label>1</label>
        <note>catalytic</note>
    </ligand>
</feature>
<feature type="binding site" evidence="1">
    <location>
        <position position="212"/>
    </location>
    <ligand>
        <name>Zn(2+)</name>
        <dbReference type="ChEBI" id="CHEBI:29105"/>
        <label>2</label>
        <note>catalytic</note>
    </ligand>
</feature>
<feature type="binding site" evidence="1">
    <location>
        <position position="270"/>
    </location>
    <ligand>
        <name>Zn(2+)</name>
        <dbReference type="ChEBI" id="CHEBI:29105"/>
        <label>2</label>
        <note>catalytic</note>
    </ligand>
</feature>
<proteinExistence type="inferred from homology"/>
<gene>
    <name evidence="1" type="primary">rnz</name>
    <name type="ordered locus">BCAH820_4164</name>
</gene>
<protein>
    <recommendedName>
        <fullName evidence="1">Ribonuclease Z</fullName>
        <shortName evidence="1">RNase Z</shortName>
        <ecNumber evidence="1">3.1.26.11</ecNumber>
    </recommendedName>
    <alternativeName>
        <fullName evidence="1">tRNA 3 endonuclease</fullName>
    </alternativeName>
    <alternativeName>
        <fullName evidence="1">tRNase Z</fullName>
    </alternativeName>
</protein>